<keyword id="KW-0067">ATP-binding</keyword>
<keyword id="KW-0436">Ligase</keyword>
<keyword id="KW-0460">Magnesium</keyword>
<keyword id="KW-0479">Metal-binding</keyword>
<keyword id="KW-0547">Nucleotide-binding</keyword>
<keyword id="KW-0816">Tricarboxylic acid cycle</keyword>
<organism>
    <name type="scientific">Solibacter usitatus (strain Ellin6076)</name>
    <dbReference type="NCBI Taxonomy" id="234267"/>
    <lineage>
        <taxon>Bacteria</taxon>
        <taxon>Pseudomonadati</taxon>
        <taxon>Acidobacteriota</taxon>
        <taxon>Terriglobia</taxon>
        <taxon>Bryobacterales</taxon>
        <taxon>Solibacteraceae</taxon>
        <taxon>Candidatus Solibacter</taxon>
    </lineage>
</organism>
<protein>
    <recommendedName>
        <fullName evidence="1">Succinate--CoA ligase [ADP-forming] subunit beta</fullName>
        <ecNumber evidence="1">6.2.1.5</ecNumber>
    </recommendedName>
    <alternativeName>
        <fullName evidence="1">Succinyl-CoA synthetase subunit beta</fullName>
        <shortName evidence="1">SCS-beta</shortName>
    </alternativeName>
</protein>
<feature type="chain" id="PRO_1000082238" description="Succinate--CoA ligase [ADP-forming] subunit beta">
    <location>
        <begin position="1"/>
        <end position="384"/>
    </location>
</feature>
<feature type="domain" description="ATP-grasp" evidence="1">
    <location>
        <begin position="9"/>
        <end position="242"/>
    </location>
</feature>
<feature type="binding site" evidence="1">
    <location>
        <position position="45"/>
    </location>
    <ligand>
        <name>ATP</name>
        <dbReference type="ChEBI" id="CHEBI:30616"/>
    </ligand>
</feature>
<feature type="binding site" evidence="1">
    <location>
        <begin position="52"/>
        <end position="54"/>
    </location>
    <ligand>
        <name>ATP</name>
        <dbReference type="ChEBI" id="CHEBI:30616"/>
    </ligand>
</feature>
<feature type="binding site" evidence="1">
    <location>
        <position position="98"/>
    </location>
    <ligand>
        <name>ATP</name>
        <dbReference type="ChEBI" id="CHEBI:30616"/>
    </ligand>
</feature>
<feature type="binding site" evidence="1">
    <location>
        <position position="101"/>
    </location>
    <ligand>
        <name>ATP</name>
        <dbReference type="ChEBI" id="CHEBI:30616"/>
    </ligand>
</feature>
<feature type="binding site" evidence="1">
    <location>
        <position position="106"/>
    </location>
    <ligand>
        <name>ATP</name>
        <dbReference type="ChEBI" id="CHEBI:30616"/>
    </ligand>
</feature>
<feature type="binding site" evidence="1">
    <location>
        <position position="197"/>
    </location>
    <ligand>
        <name>Mg(2+)</name>
        <dbReference type="ChEBI" id="CHEBI:18420"/>
    </ligand>
</feature>
<feature type="binding site" evidence="1">
    <location>
        <position position="211"/>
    </location>
    <ligand>
        <name>Mg(2+)</name>
        <dbReference type="ChEBI" id="CHEBI:18420"/>
    </ligand>
</feature>
<feature type="binding site" evidence="1">
    <location>
        <position position="262"/>
    </location>
    <ligand>
        <name>substrate</name>
        <note>ligand shared with subunit alpha</note>
    </ligand>
</feature>
<feature type="binding site" evidence="1">
    <location>
        <begin position="319"/>
        <end position="321"/>
    </location>
    <ligand>
        <name>substrate</name>
        <note>ligand shared with subunit alpha</note>
    </ligand>
</feature>
<accession>Q021N6</accession>
<gene>
    <name evidence="1" type="primary">sucC</name>
    <name type="ordered locus">Acid_3378</name>
</gene>
<reference key="1">
    <citation type="journal article" date="2009" name="Appl. Environ. Microbiol.">
        <title>Three genomes from the phylum Acidobacteria provide insight into the lifestyles of these microorganisms in soils.</title>
        <authorList>
            <person name="Ward N.L."/>
            <person name="Challacombe J.F."/>
            <person name="Janssen P.H."/>
            <person name="Henrissat B."/>
            <person name="Coutinho P.M."/>
            <person name="Wu M."/>
            <person name="Xie G."/>
            <person name="Haft D.H."/>
            <person name="Sait M."/>
            <person name="Badger J."/>
            <person name="Barabote R.D."/>
            <person name="Bradley B."/>
            <person name="Brettin T.S."/>
            <person name="Brinkac L.M."/>
            <person name="Bruce D."/>
            <person name="Creasy T."/>
            <person name="Daugherty S.C."/>
            <person name="Davidsen T.M."/>
            <person name="DeBoy R.T."/>
            <person name="Detter J.C."/>
            <person name="Dodson R.J."/>
            <person name="Durkin A.S."/>
            <person name="Ganapathy A."/>
            <person name="Gwinn-Giglio M."/>
            <person name="Han C.S."/>
            <person name="Khouri H."/>
            <person name="Kiss H."/>
            <person name="Kothari S.P."/>
            <person name="Madupu R."/>
            <person name="Nelson K.E."/>
            <person name="Nelson W.C."/>
            <person name="Paulsen I."/>
            <person name="Penn K."/>
            <person name="Ren Q."/>
            <person name="Rosovitz M.J."/>
            <person name="Selengut J.D."/>
            <person name="Shrivastava S."/>
            <person name="Sullivan S.A."/>
            <person name="Tapia R."/>
            <person name="Thompson L.S."/>
            <person name="Watkins K.L."/>
            <person name="Yang Q."/>
            <person name="Yu C."/>
            <person name="Zafar N."/>
            <person name="Zhou L."/>
            <person name="Kuske C.R."/>
        </authorList>
    </citation>
    <scope>NUCLEOTIDE SEQUENCE [LARGE SCALE GENOMIC DNA]</scope>
    <source>
        <strain>Ellin6076</strain>
    </source>
</reference>
<evidence type="ECO:0000255" key="1">
    <source>
        <dbReference type="HAMAP-Rule" id="MF_00558"/>
    </source>
</evidence>
<name>SUCC_SOLUE</name>
<sequence>MKIHEYQAKAILAQYKVPVPRGHVAYTEADAETAAKTLGGSVVVKAQIHAGGRGKGGGVKVAKDAAEALELAKKILGMTLVTHQTGPEGRLVQRLLIEETLPIERELYLGIVLDRVQGKPVFMASSAGGMDIEEVAAKTPELILKETLEYPGLSPYQARKLAFGIGIPAASVNAAAAAMTALSKAYWAMDASLAEINPFILTTDGKVYALDAKITFDDNALYRHKELVELRDLNEEDPLEVEASKHGLNYIKLDGTVGCMVNGAGLAMATMDIIKFAGGSPANFLDVGGGANAEQVKNAFRILLSDHSVKAVLINIFGGILRCDTLATGVVAAARDLNIQVPIVVRMEGTNVEAGRQILLESGFNFTVGADMWDAAQKVVKLAA</sequence>
<comment type="function">
    <text evidence="1">Succinyl-CoA synthetase functions in the citric acid cycle (TCA), coupling the hydrolysis of succinyl-CoA to the synthesis of either ATP or GTP and thus represents the only step of substrate-level phosphorylation in the TCA. The beta subunit provides nucleotide specificity of the enzyme and binds the substrate succinate, while the binding sites for coenzyme A and phosphate are found in the alpha subunit.</text>
</comment>
<comment type="catalytic activity">
    <reaction evidence="1">
        <text>succinate + ATP + CoA = succinyl-CoA + ADP + phosphate</text>
        <dbReference type="Rhea" id="RHEA:17661"/>
        <dbReference type="ChEBI" id="CHEBI:30031"/>
        <dbReference type="ChEBI" id="CHEBI:30616"/>
        <dbReference type="ChEBI" id="CHEBI:43474"/>
        <dbReference type="ChEBI" id="CHEBI:57287"/>
        <dbReference type="ChEBI" id="CHEBI:57292"/>
        <dbReference type="ChEBI" id="CHEBI:456216"/>
        <dbReference type="EC" id="6.2.1.5"/>
    </reaction>
    <physiologicalReaction direction="right-to-left" evidence="1">
        <dbReference type="Rhea" id="RHEA:17663"/>
    </physiologicalReaction>
</comment>
<comment type="catalytic activity">
    <reaction evidence="1">
        <text>GTP + succinate + CoA = succinyl-CoA + GDP + phosphate</text>
        <dbReference type="Rhea" id="RHEA:22120"/>
        <dbReference type="ChEBI" id="CHEBI:30031"/>
        <dbReference type="ChEBI" id="CHEBI:37565"/>
        <dbReference type="ChEBI" id="CHEBI:43474"/>
        <dbReference type="ChEBI" id="CHEBI:57287"/>
        <dbReference type="ChEBI" id="CHEBI:57292"/>
        <dbReference type="ChEBI" id="CHEBI:58189"/>
    </reaction>
    <physiologicalReaction direction="right-to-left" evidence="1">
        <dbReference type="Rhea" id="RHEA:22122"/>
    </physiologicalReaction>
</comment>
<comment type="cofactor">
    <cofactor evidence="1">
        <name>Mg(2+)</name>
        <dbReference type="ChEBI" id="CHEBI:18420"/>
    </cofactor>
    <text evidence="1">Binds 1 Mg(2+) ion per subunit.</text>
</comment>
<comment type="pathway">
    <text evidence="1">Carbohydrate metabolism; tricarboxylic acid cycle; succinate from succinyl-CoA (ligase route): step 1/1.</text>
</comment>
<comment type="subunit">
    <text evidence="1">Heterotetramer of two alpha and two beta subunits.</text>
</comment>
<comment type="similarity">
    <text evidence="1">Belongs to the succinate/malate CoA ligase beta subunit family.</text>
</comment>
<dbReference type="EC" id="6.2.1.5" evidence="1"/>
<dbReference type="EMBL" id="CP000473">
    <property type="protein sequence ID" value="ABJ84351.1"/>
    <property type="molecule type" value="Genomic_DNA"/>
</dbReference>
<dbReference type="SMR" id="Q021N6"/>
<dbReference type="FunCoup" id="Q021N6">
    <property type="interactions" value="632"/>
</dbReference>
<dbReference type="STRING" id="234267.Acid_3378"/>
<dbReference type="KEGG" id="sus:Acid_3378"/>
<dbReference type="eggNOG" id="COG0045">
    <property type="taxonomic scope" value="Bacteria"/>
</dbReference>
<dbReference type="HOGENOM" id="CLU_037430_0_2_0"/>
<dbReference type="InParanoid" id="Q021N6"/>
<dbReference type="OrthoDB" id="9802602at2"/>
<dbReference type="UniPathway" id="UPA00223">
    <property type="reaction ID" value="UER00999"/>
</dbReference>
<dbReference type="GO" id="GO:0005829">
    <property type="term" value="C:cytosol"/>
    <property type="evidence" value="ECO:0007669"/>
    <property type="project" value="TreeGrafter"/>
</dbReference>
<dbReference type="GO" id="GO:0042709">
    <property type="term" value="C:succinate-CoA ligase complex"/>
    <property type="evidence" value="ECO:0007669"/>
    <property type="project" value="TreeGrafter"/>
</dbReference>
<dbReference type="GO" id="GO:0005524">
    <property type="term" value="F:ATP binding"/>
    <property type="evidence" value="ECO:0007669"/>
    <property type="project" value="UniProtKB-UniRule"/>
</dbReference>
<dbReference type="GO" id="GO:0000287">
    <property type="term" value="F:magnesium ion binding"/>
    <property type="evidence" value="ECO:0007669"/>
    <property type="project" value="UniProtKB-UniRule"/>
</dbReference>
<dbReference type="GO" id="GO:0004775">
    <property type="term" value="F:succinate-CoA ligase (ADP-forming) activity"/>
    <property type="evidence" value="ECO:0007669"/>
    <property type="project" value="UniProtKB-UniRule"/>
</dbReference>
<dbReference type="GO" id="GO:0004776">
    <property type="term" value="F:succinate-CoA ligase (GDP-forming) activity"/>
    <property type="evidence" value="ECO:0007669"/>
    <property type="project" value="RHEA"/>
</dbReference>
<dbReference type="GO" id="GO:0006104">
    <property type="term" value="P:succinyl-CoA metabolic process"/>
    <property type="evidence" value="ECO:0007669"/>
    <property type="project" value="TreeGrafter"/>
</dbReference>
<dbReference type="GO" id="GO:0006099">
    <property type="term" value="P:tricarboxylic acid cycle"/>
    <property type="evidence" value="ECO:0007669"/>
    <property type="project" value="UniProtKB-UniRule"/>
</dbReference>
<dbReference type="FunFam" id="3.30.1490.20:FF:000002">
    <property type="entry name" value="Succinate--CoA ligase [ADP-forming] subunit beta"/>
    <property type="match status" value="1"/>
</dbReference>
<dbReference type="FunFam" id="3.30.470.20:FF:000002">
    <property type="entry name" value="Succinate--CoA ligase [ADP-forming] subunit beta"/>
    <property type="match status" value="1"/>
</dbReference>
<dbReference type="FunFam" id="3.40.50.261:FF:000001">
    <property type="entry name" value="Succinate--CoA ligase [ADP-forming] subunit beta"/>
    <property type="match status" value="1"/>
</dbReference>
<dbReference type="Gene3D" id="3.30.1490.20">
    <property type="entry name" value="ATP-grasp fold, A domain"/>
    <property type="match status" value="1"/>
</dbReference>
<dbReference type="Gene3D" id="3.30.470.20">
    <property type="entry name" value="ATP-grasp fold, B domain"/>
    <property type="match status" value="1"/>
</dbReference>
<dbReference type="Gene3D" id="3.40.50.261">
    <property type="entry name" value="Succinyl-CoA synthetase domains"/>
    <property type="match status" value="1"/>
</dbReference>
<dbReference type="HAMAP" id="MF_00558">
    <property type="entry name" value="Succ_CoA_beta"/>
    <property type="match status" value="1"/>
</dbReference>
<dbReference type="InterPro" id="IPR011761">
    <property type="entry name" value="ATP-grasp"/>
</dbReference>
<dbReference type="InterPro" id="IPR013650">
    <property type="entry name" value="ATP-grasp_succ-CoA_synth-type"/>
</dbReference>
<dbReference type="InterPro" id="IPR013815">
    <property type="entry name" value="ATP_grasp_subdomain_1"/>
</dbReference>
<dbReference type="InterPro" id="IPR017866">
    <property type="entry name" value="Succ-CoA_synthase_bsu_CS"/>
</dbReference>
<dbReference type="InterPro" id="IPR005811">
    <property type="entry name" value="SUCC_ACL_C"/>
</dbReference>
<dbReference type="InterPro" id="IPR005809">
    <property type="entry name" value="Succ_CoA_ligase-like_bsu"/>
</dbReference>
<dbReference type="InterPro" id="IPR016102">
    <property type="entry name" value="Succinyl-CoA_synth-like"/>
</dbReference>
<dbReference type="NCBIfam" id="NF001913">
    <property type="entry name" value="PRK00696.1"/>
    <property type="match status" value="1"/>
</dbReference>
<dbReference type="NCBIfam" id="TIGR01016">
    <property type="entry name" value="sucCoAbeta"/>
    <property type="match status" value="1"/>
</dbReference>
<dbReference type="PANTHER" id="PTHR11815:SF10">
    <property type="entry name" value="SUCCINATE--COA LIGASE [GDP-FORMING] SUBUNIT BETA, MITOCHONDRIAL"/>
    <property type="match status" value="1"/>
</dbReference>
<dbReference type="PANTHER" id="PTHR11815">
    <property type="entry name" value="SUCCINYL-COA SYNTHETASE BETA CHAIN"/>
    <property type="match status" value="1"/>
</dbReference>
<dbReference type="Pfam" id="PF08442">
    <property type="entry name" value="ATP-grasp_2"/>
    <property type="match status" value="1"/>
</dbReference>
<dbReference type="Pfam" id="PF00549">
    <property type="entry name" value="Ligase_CoA"/>
    <property type="match status" value="1"/>
</dbReference>
<dbReference type="PIRSF" id="PIRSF001554">
    <property type="entry name" value="SucCS_beta"/>
    <property type="match status" value="1"/>
</dbReference>
<dbReference type="SUPFAM" id="SSF56059">
    <property type="entry name" value="Glutathione synthetase ATP-binding domain-like"/>
    <property type="match status" value="1"/>
</dbReference>
<dbReference type="SUPFAM" id="SSF52210">
    <property type="entry name" value="Succinyl-CoA synthetase domains"/>
    <property type="match status" value="1"/>
</dbReference>
<dbReference type="PROSITE" id="PS50975">
    <property type="entry name" value="ATP_GRASP"/>
    <property type="match status" value="1"/>
</dbReference>
<dbReference type="PROSITE" id="PS01217">
    <property type="entry name" value="SUCCINYL_COA_LIG_3"/>
    <property type="match status" value="1"/>
</dbReference>
<proteinExistence type="inferred from homology"/>